<sequence>LQTGRLFPETLKLIDETENQYDIRISRYEPEQADIDAYAEKYGLNGFYESVEARHACCGVRKLKPLARALSGATIWVTGLRRGQSANRADTPFAEYDPERNLIKVNPLADWDIDVIRAYVADNGVPVNPLHQRGYPSIGCEPCTRAIKPGEPERAGRWWWENDEKRECGLHVHEEAAAAQ</sequence>
<keyword id="KW-0963">Cytoplasm</keyword>
<keyword id="KW-0408">Iron</keyword>
<keyword id="KW-0411">Iron-sulfur</keyword>
<keyword id="KW-0479">Metal-binding</keyword>
<keyword id="KW-0560">Oxidoreductase</keyword>
<organism>
    <name type="scientific">Rhizobium tropici</name>
    <dbReference type="NCBI Taxonomy" id="398"/>
    <lineage>
        <taxon>Bacteria</taxon>
        <taxon>Pseudomonadati</taxon>
        <taxon>Pseudomonadota</taxon>
        <taxon>Alphaproteobacteria</taxon>
        <taxon>Hyphomicrobiales</taxon>
        <taxon>Rhizobiaceae</taxon>
        <taxon>Rhizobium/Agrobacterium group</taxon>
        <taxon>Rhizobium</taxon>
    </lineage>
</organism>
<comment type="function">
    <text evidence="1">Catalyzes the formation of sulfite from adenosine 5'-phosphosulfate (APS) using thioredoxin as an electron donor.</text>
</comment>
<comment type="catalytic activity">
    <reaction evidence="1">
        <text>[thioredoxin]-disulfide + sulfite + AMP + 2 H(+) = adenosine 5'-phosphosulfate + [thioredoxin]-dithiol</text>
        <dbReference type="Rhea" id="RHEA:21976"/>
        <dbReference type="Rhea" id="RHEA-COMP:10698"/>
        <dbReference type="Rhea" id="RHEA-COMP:10700"/>
        <dbReference type="ChEBI" id="CHEBI:15378"/>
        <dbReference type="ChEBI" id="CHEBI:17359"/>
        <dbReference type="ChEBI" id="CHEBI:29950"/>
        <dbReference type="ChEBI" id="CHEBI:50058"/>
        <dbReference type="ChEBI" id="CHEBI:58243"/>
        <dbReference type="ChEBI" id="CHEBI:456215"/>
        <dbReference type="EC" id="1.8.4.10"/>
    </reaction>
</comment>
<comment type="cofactor">
    <cofactor evidence="1">
        <name>[4Fe-4S] cluster</name>
        <dbReference type="ChEBI" id="CHEBI:49883"/>
    </cofactor>
    <text evidence="1">Binds 1 [4Fe-4S] cluster per subunit.</text>
</comment>
<comment type="pathway">
    <text evidence="1">Sulfur metabolism; hydrogen sulfide biosynthesis; sulfite from sulfate.</text>
</comment>
<comment type="subcellular location">
    <subcellularLocation>
        <location evidence="1">Cytoplasm</location>
    </subcellularLocation>
</comment>
<comment type="similarity">
    <text evidence="1 2">Belongs to the PAPS reductase family. CysH subfamily.</text>
</comment>
<name>CYSH_RHITR</name>
<dbReference type="EC" id="1.8.4.10" evidence="1"/>
<dbReference type="EMBL" id="AJ001223">
    <property type="protein sequence ID" value="CAA04617.1"/>
    <property type="molecule type" value="Genomic_DNA"/>
</dbReference>
<dbReference type="SMR" id="O33579"/>
<dbReference type="GO" id="GO:0005737">
    <property type="term" value="C:cytoplasm"/>
    <property type="evidence" value="ECO:0007669"/>
    <property type="project" value="UniProtKB-SubCell"/>
</dbReference>
<dbReference type="GO" id="GO:0043866">
    <property type="term" value="F:adenylyl-sulfate reductase (thioredoxin) activity"/>
    <property type="evidence" value="ECO:0007669"/>
    <property type="project" value="UniProtKB-EC"/>
</dbReference>
<dbReference type="GO" id="GO:0051536">
    <property type="term" value="F:iron-sulfur cluster binding"/>
    <property type="evidence" value="ECO:0007669"/>
    <property type="project" value="UniProtKB-KW"/>
</dbReference>
<dbReference type="GO" id="GO:0046872">
    <property type="term" value="F:metal ion binding"/>
    <property type="evidence" value="ECO:0007669"/>
    <property type="project" value="UniProtKB-KW"/>
</dbReference>
<dbReference type="GO" id="GO:0004604">
    <property type="term" value="F:phosphoadenylyl-sulfate reductase (thioredoxin) activity"/>
    <property type="evidence" value="ECO:0007669"/>
    <property type="project" value="InterPro"/>
</dbReference>
<dbReference type="GO" id="GO:0019344">
    <property type="term" value="P:cysteine biosynthetic process"/>
    <property type="evidence" value="ECO:0007669"/>
    <property type="project" value="InterPro"/>
</dbReference>
<dbReference type="GO" id="GO:0019379">
    <property type="term" value="P:sulfate assimilation, phosphoadenylyl sulfate reduction by phosphoadenylyl-sulfate reductase (thioredoxin)"/>
    <property type="evidence" value="ECO:0007669"/>
    <property type="project" value="InterPro"/>
</dbReference>
<dbReference type="CDD" id="cd23945">
    <property type="entry name" value="PAPS_reductase"/>
    <property type="match status" value="1"/>
</dbReference>
<dbReference type="Gene3D" id="3.40.50.620">
    <property type="entry name" value="HUPs"/>
    <property type="match status" value="1"/>
</dbReference>
<dbReference type="HAMAP" id="MF_00063">
    <property type="entry name" value="CysH"/>
    <property type="match status" value="1"/>
</dbReference>
<dbReference type="InterPro" id="IPR011798">
    <property type="entry name" value="APS_reductase"/>
</dbReference>
<dbReference type="InterPro" id="IPR004511">
    <property type="entry name" value="PAPS/APS_Rdtase"/>
</dbReference>
<dbReference type="InterPro" id="IPR002500">
    <property type="entry name" value="PAPS_reduct_dom"/>
</dbReference>
<dbReference type="InterPro" id="IPR014729">
    <property type="entry name" value="Rossmann-like_a/b/a_fold"/>
</dbReference>
<dbReference type="NCBIfam" id="TIGR02055">
    <property type="entry name" value="APS_reductase"/>
    <property type="match status" value="1"/>
</dbReference>
<dbReference type="NCBIfam" id="NF002537">
    <property type="entry name" value="PRK02090.1"/>
    <property type="match status" value="1"/>
</dbReference>
<dbReference type="PANTHER" id="PTHR46482:SF9">
    <property type="entry name" value="5'-ADENYLYLSULFATE REDUCTASE 1, CHLOROPLASTIC"/>
    <property type="match status" value="1"/>
</dbReference>
<dbReference type="PANTHER" id="PTHR46482">
    <property type="entry name" value="5'-ADENYLYLSULFATE REDUCTASE 3, CHLOROPLASTIC"/>
    <property type="match status" value="1"/>
</dbReference>
<dbReference type="Pfam" id="PF01507">
    <property type="entry name" value="PAPS_reduct"/>
    <property type="match status" value="1"/>
</dbReference>
<dbReference type="PIRSF" id="PIRSF000857">
    <property type="entry name" value="PAPS_reductase"/>
    <property type="match status" value="1"/>
</dbReference>
<dbReference type="SUPFAM" id="SSF52402">
    <property type="entry name" value="Adenine nucleotide alpha hydrolases-like"/>
    <property type="match status" value="1"/>
</dbReference>
<proteinExistence type="inferred from homology"/>
<protein>
    <recommendedName>
        <fullName evidence="1">Adenosine 5'-phosphosulfate reductase</fullName>
        <shortName evidence="1">APS reductase</shortName>
        <ecNumber evidence="1">1.8.4.10</ecNumber>
    </recommendedName>
    <alternativeName>
        <fullName evidence="1">5'-adenylylsulfate reductase</fullName>
    </alternativeName>
    <alternativeName>
        <fullName evidence="1">Thioredoxin-dependent 5'-adenylylsulfate reductase</fullName>
    </alternativeName>
</protein>
<reference key="1">
    <citation type="journal article" date="1998" name="DNA Seq.">
        <title>Isolation and sequencing of a second Rhizobium tropici CFN299 genetic locus that contains genes homologous to amino acid sulphate activation genes.</title>
        <authorList>
            <person name="Laeremans T."/>
            <person name="Martinez-Romero E."/>
            <person name="Vanderleyden J."/>
        </authorList>
    </citation>
    <scope>NUCLEOTIDE SEQUENCE [GENOMIC DNA]</scope>
    <source>
        <strain>CFN 299</strain>
    </source>
</reference>
<feature type="chain" id="PRO_0000100641" description="Adenosine 5'-phosphosulfate reductase">
    <location>
        <begin position="1" status="less than"/>
        <end position="180"/>
    </location>
</feature>
<feature type="active site" description="Nucleophile; cysteine thiosulfonate intermediate" evidence="1">
    <location>
        <position position="168"/>
    </location>
</feature>
<feature type="binding site" evidence="1">
    <location>
        <position position="57"/>
    </location>
    <ligand>
        <name>[4Fe-4S] cluster</name>
        <dbReference type="ChEBI" id="CHEBI:49883"/>
    </ligand>
</feature>
<feature type="binding site" evidence="1">
    <location>
        <position position="58"/>
    </location>
    <ligand>
        <name>[4Fe-4S] cluster</name>
        <dbReference type="ChEBI" id="CHEBI:49883"/>
    </ligand>
</feature>
<feature type="binding site" evidence="1">
    <location>
        <position position="140"/>
    </location>
    <ligand>
        <name>[4Fe-4S] cluster</name>
        <dbReference type="ChEBI" id="CHEBI:49883"/>
    </ligand>
</feature>
<feature type="binding site" evidence="1">
    <location>
        <position position="143"/>
    </location>
    <ligand>
        <name>[4Fe-4S] cluster</name>
        <dbReference type="ChEBI" id="CHEBI:49883"/>
    </ligand>
</feature>
<feature type="non-terminal residue">
    <location>
        <position position="1"/>
    </location>
</feature>
<gene>
    <name evidence="1" type="primary">cysH</name>
</gene>
<evidence type="ECO:0000255" key="1">
    <source>
        <dbReference type="HAMAP-Rule" id="MF_00063"/>
    </source>
</evidence>
<evidence type="ECO:0000305" key="2"/>
<accession>O33579</accession>